<feature type="chain" id="PRO_1000040560" description="GTP cyclohydrolase-2">
    <location>
        <begin position="1"/>
        <end position="202"/>
    </location>
</feature>
<feature type="active site" description="Proton acceptor" evidence="1">
    <location>
        <position position="125"/>
    </location>
</feature>
<feature type="active site" description="Nucleophile" evidence="1">
    <location>
        <position position="127"/>
    </location>
</feature>
<feature type="binding site" evidence="1">
    <location>
        <begin position="48"/>
        <end position="52"/>
    </location>
    <ligand>
        <name>GTP</name>
        <dbReference type="ChEBI" id="CHEBI:37565"/>
    </ligand>
</feature>
<feature type="binding site" evidence="1">
    <location>
        <position position="53"/>
    </location>
    <ligand>
        <name>Zn(2+)</name>
        <dbReference type="ChEBI" id="CHEBI:29105"/>
        <note>catalytic</note>
    </ligand>
</feature>
<feature type="binding site" evidence="1">
    <location>
        <position position="64"/>
    </location>
    <ligand>
        <name>Zn(2+)</name>
        <dbReference type="ChEBI" id="CHEBI:29105"/>
        <note>catalytic</note>
    </ligand>
</feature>
<feature type="binding site" evidence="1">
    <location>
        <position position="66"/>
    </location>
    <ligand>
        <name>Zn(2+)</name>
        <dbReference type="ChEBI" id="CHEBI:29105"/>
        <note>catalytic</note>
    </ligand>
</feature>
<feature type="binding site" evidence="1">
    <location>
        <position position="69"/>
    </location>
    <ligand>
        <name>GTP</name>
        <dbReference type="ChEBI" id="CHEBI:37565"/>
    </ligand>
</feature>
<feature type="binding site" evidence="1">
    <location>
        <begin position="91"/>
        <end position="93"/>
    </location>
    <ligand>
        <name>GTP</name>
        <dbReference type="ChEBI" id="CHEBI:37565"/>
    </ligand>
</feature>
<feature type="binding site" evidence="1">
    <location>
        <position position="113"/>
    </location>
    <ligand>
        <name>GTP</name>
        <dbReference type="ChEBI" id="CHEBI:37565"/>
    </ligand>
</feature>
<feature type="binding site" evidence="1">
    <location>
        <position position="148"/>
    </location>
    <ligand>
        <name>GTP</name>
        <dbReference type="ChEBI" id="CHEBI:37565"/>
    </ligand>
</feature>
<feature type="binding site" evidence="1">
    <location>
        <position position="153"/>
    </location>
    <ligand>
        <name>GTP</name>
        <dbReference type="ChEBI" id="CHEBI:37565"/>
    </ligand>
</feature>
<keyword id="KW-0342">GTP-binding</keyword>
<keyword id="KW-0378">Hydrolase</keyword>
<keyword id="KW-0479">Metal-binding</keyword>
<keyword id="KW-0547">Nucleotide-binding</keyword>
<keyword id="KW-0686">Riboflavin biosynthesis</keyword>
<keyword id="KW-0862">Zinc</keyword>
<accession>Q47WV5</accession>
<comment type="function">
    <text evidence="1">Catalyzes the conversion of GTP to 2,5-diamino-6-ribosylamino-4(3H)-pyrimidinone 5'-phosphate (DARP), formate and pyrophosphate.</text>
</comment>
<comment type="catalytic activity">
    <reaction evidence="1">
        <text>GTP + 4 H2O = 2,5-diamino-6-hydroxy-4-(5-phosphoribosylamino)-pyrimidine + formate + 2 phosphate + 3 H(+)</text>
        <dbReference type="Rhea" id="RHEA:23704"/>
        <dbReference type="ChEBI" id="CHEBI:15377"/>
        <dbReference type="ChEBI" id="CHEBI:15378"/>
        <dbReference type="ChEBI" id="CHEBI:15740"/>
        <dbReference type="ChEBI" id="CHEBI:37565"/>
        <dbReference type="ChEBI" id="CHEBI:43474"/>
        <dbReference type="ChEBI" id="CHEBI:58614"/>
        <dbReference type="EC" id="3.5.4.25"/>
    </reaction>
</comment>
<comment type="cofactor">
    <cofactor evidence="1">
        <name>Zn(2+)</name>
        <dbReference type="ChEBI" id="CHEBI:29105"/>
    </cofactor>
    <text evidence="1">Binds 1 zinc ion per subunit.</text>
</comment>
<comment type="pathway">
    <text evidence="1">Cofactor biosynthesis; riboflavin biosynthesis; 5-amino-6-(D-ribitylamino)uracil from GTP: step 1/4.</text>
</comment>
<comment type="similarity">
    <text evidence="1">Belongs to the GTP cyclohydrolase II family.</text>
</comment>
<name>RIBA_COLP3</name>
<evidence type="ECO:0000255" key="1">
    <source>
        <dbReference type="HAMAP-Rule" id="MF_00179"/>
    </source>
</evidence>
<gene>
    <name evidence="1" type="primary">ribA</name>
    <name type="ordered locus">CPS_4061</name>
</gene>
<proteinExistence type="inferred from homology"/>
<protein>
    <recommendedName>
        <fullName evidence="1">GTP cyclohydrolase-2</fullName>
        <ecNumber evidence="1">3.5.4.25</ecNumber>
    </recommendedName>
    <alternativeName>
        <fullName evidence="1">GTP cyclohydrolase II</fullName>
    </alternativeName>
</protein>
<sequence length="202" mass="22850">MSVNFVDSCRLPTHLGEFEMYGFVEESGQEHIMLTYGEITPDKPLLIRLHSECLTGDSLFSMRCDCGYQLETALENIVDAGQGALLYLRQEGRGIGLINKIKAYHLQDDGADTVEANEQLGFAADLRRYTMCKPMLEHFRVNKVKLLTNNPKKVQALKDLGIEVVEQMPIQVGRNQYNHEYLNTKAERMGHMMTHGLLSDLG</sequence>
<dbReference type="EC" id="3.5.4.25" evidence="1"/>
<dbReference type="EMBL" id="CP000083">
    <property type="protein sequence ID" value="AAZ28342.1"/>
    <property type="molecule type" value="Genomic_DNA"/>
</dbReference>
<dbReference type="RefSeq" id="WP_011044797.1">
    <property type="nucleotide sequence ID" value="NC_003910.7"/>
</dbReference>
<dbReference type="SMR" id="Q47WV5"/>
<dbReference type="STRING" id="167879.CPS_4061"/>
<dbReference type="KEGG" id="cps:CPS_4061"/>
<dbReference type="HOGENOM" id="CLU_020273_2_1_6"/>
<dbReference type="UniPathway" id="UPA00275">
    <property type="reaction ID" value="UER00400"/>
</dbReference>
<dbReference type="Proteomes" id="UP000000547">
    <property type="component" value="Chromosome"/>
</dbReference>
<dbReference type="GO" id="GO:0005829">
    <property type="term" value="C:cytosol"/>
    <property type="evidence" value="ECO:0007669"/>
    <property type="project" value="TreeGrafter"/>
</dbReference>
<dbReference type="GO" id="GO:0005525">
    <property type="term" value="F:GTP binding"/>
    <property type="evidence" value="ECO:0007669"/>
    <property type="project" value="UniProtKB-KW"/>
</dbReference>
<dbReference type="GO" id="GO:0003935">
    <property type="term" value="F:GTP cyclohydrolase II activity"/>
    <property type="evidence" value="ECO:0007669"/>
    <property type="project" value="UniProtKB-UniRule"/>
</dbReference>
<dbReference type="GO" id="GO:0008270">
    <property type="term" value="F:zinc ion binding"/>
    <property type="evidence" value="ECO:0007669"/>
    <property type="project" value="UniProtKB-UniRule"/>
</dbReference>
<dbReference type="GO" id="GO:0009231">
    <property type="term" value="P:riboflavin biosynthetic process"/>
    <property type="evidence" value="ECO:0007669"/>
    <property type="project" value="UniProtKB-UniRule"/>
</dbReference>
<dbReference type="CDD" id="cd00641">
    <property type="entry name" value="GTP_cyclohydro2"/>
    <property type="match status" value="1"/>
</dbReference>
<dbReference type="FunFam" id="3.40.50.10990:FF:000002">
    <property type="entry name" value="GTP cyclohydrolase-2"/>
    <property type="match status" value="1"/>
</dbReference>
<dbReference type="Gene3D" id="3.40.50.10990">
    <property type="entry name" value="GTP cyclohydrolase II"/>
    <property type="match status" value="1"/>
</dbReference>
<dbReference type="HAMAP" id="MF_00179">
    <property type="entry name" value="RibA"/>
    <property type="match status" value="1"/>
</dbReference>
<dbReference type="InterPro" id="IPR032677">
    <property type="entry name" value="GTP_cyclohydro_II"/>
</dbReference>
<dbReference type="InterPro" id="IPR000926">
    <property type="entry name" value="RibA"/>
</dbReference>
<dbReference type="InterPro" id="IPR036144">
    <property type="entry name" value="RibA-like_sf"/>
</dbReference>
<dbReference type="NCBIfam" id="NF001591">
    <property type="entry name" value="PRK00393.1"/>
    <property type="match status" value="1"/>
</dbReference>
<dbReference type="NCBIfam" id="TIGR00505">
    <property type="entry name" value="ribA"/>
    <property type="match status" value="1"/>
</dbReference>
<dbReference type="PANTHER" id="PTHR21327:SF18">
    <property type="entry name" value="3,4-DIHYDROXY-2-BUTANONE 4-PHOSPHATE SYNTHASE"/>
    <property type="match status" value="1"/>
</dbReference>
<dbReference type="PANTHER" id="PTHR21327">
    <property type="entry name" value="GTP CYCLOHYDROLASE II-RELATED"/>
    <property type="match status" value="1"/>
</dbReference>
<dbReference type="Pfam" id="PF00925">
    <property type="entry name" value="GTP_cyclohydro2"/>
    <property type="match status" value="1"/>
</dbReference>
<dbReference type="SUPFAM" id="SSF142695">
    <property type="entry name" value="RibA-like"/>
    <property type="match status" value="1"/>
</dbReference>
<organism>
    <name type="scientific">Colwellia psychrerythraea (strain 34H / ATCC BAA-681)</name>
    <name type="common">Vibrio psychroerythus</name>
    <dbReference type="NCBI Taxonomy" id="167879"/>
    <lineage>
        <taxon>Bacteria</taxon>
        <taxon>Pseudomonadati</taxon>
        <taxon>Pseudomonadota</taxon>
        <taxon>Gammaproteobacteria</taxon>
        <taxon>Alteromonadales</taxon>
        <taxon>Colwelliaceae</taxon>
        <taxon>Colwellia</taxon>
    </lineage>
</organism>
<reference key="1">
    <citation type="journal article" date="2005" name="Proc. Natl. Acad. Sci. U.S.A.">
        <title>The psychrophilic lifestyle as revealed by the genome sequence of Colwellia psychrerythraea 34H through genomic and proteomic analyses.</title>
        <authorList>
            <person name="Methe B.A."/>
            <person name="Nelson K.E."/>
            <person name="Deming J.W."/>
            <person name="Momen B."/>
            <person name="Melamud E."/>
            <person name="Zhang X."/>
            <person name="Moult J."/>
            <person name="Madupu R."/>
            <person name="Nelson W.C."/>
            <person name="Dodson R.J."/>
            <person name="Brinkac L.M."/>
            <person name="Daugherty S.C."/>
            <person name="Durkin A.S."/>
            <person name="DeBoy R.T."/>
            <person name="Kolonay J.F."/>
            <person name="Sullivan S.A."/>
            <person name="Zhou L."/>
            <person name="Davidsen T.M."/>
            <person name="Wu M."/>
            <person name="Huston A.L."/>
            <person name="Lewis M."/>
            <person name="Weaver B."/>
            <person name="Weidman J.F."/>
            <person name="Khouri H."/>
            <person name="Utterback T.R."/>
            <person name="Feldblyum T.V."/>
            <person name="Fraser C.M."/>
        </authorList>
    </citation>
    <scope>NUCLEOTIDE SEQUENCE [LARGE SCALE GENOMIC DNA]</scope>
    <source>
        <strain>34H / ATCC BAA-681</strain>
    </source>
</reference>